<organism>
    <name type="scientific">Staphylococcus epidermidis (strain ATCC 12228 / FDA PCI 1200)</name>
    <dbReference type="NCBI Taxonomy" id="176280"/>
    <lineage>
        <taxon>Bacteria</taxon>
        <taxon>Bacillati</taxon>
        <taxon>Bacillota</taxon>
        <taxon>Bacilli</taxon>
        <taxon>Bacillales</taxon>
        <taxon>Staphylococcaceae</taxon>
        <taxon>Staphylococcus</taxon>
    </lineage>
</organism>
<dbReference type="EC" id="1.1.1.23" evidence="1"/>
<dbReference type="EMBL" id="AE015929">
    <property type="protein sequence ID" value="AAO03869.1"/>
    <property type="molecule type" value="Genomic_DNA"/>
</dbReference>
<dbReference type="RefSeq" id="NP_763827.1">
    <property type="nucleotide sequence ID" value="NC_004461.1"/>
</dbReference>
<dbReference type="RefSeq" id="WP_001829419.1">
    <property type="nucleotide sequence ID" value="NZ_WBME01000037.1"/>
</dbReference>
<dbReference type="SMR" id="Q8CQ95"/>
<dbReference type="GeneID" id="50017666"/>
<dbReference type="KEGG" id="sep:SE_0272"/>
<dbReference type="PATRIC" id="fig|176280.10.peg.250"/>
<dbReference type="eggNOG" id="COG0141">
    <property type="taxonomic scope" value="Bacteria"/>
</dbReference>
<dbReference type="HOGENOM" id="CLU_006732_3_3_9"/>
<dbReference type="OrthoDB" id="9805269at2"/>
<dbReference type="UniPathway" id="UPA00031">
    <property type="reaction ID" value="UER00014"/>
</dbReference>
<dbReference type="Proteomes" id="UP000001411">
    <property type="component" value="Chromosome"/>
</dbReference>
<dbReference type="GO" id="GO:0005829">
    <property type="term" value="C:cytosol"/>
    <property type="evidence" value="ECO:0007669"/>
    <property type="project" value="TreeGrafter"/>
</dbReference>
<dbReference type="GO" id="GO:0004399">
    <property type="term" value="F:histidinol dehydrogenase activity"/>
    <property type="evidence" value="ECO:0007669"/>
    <property type="project" value="UniProtKB-UniRule"/>
</dbReference>
<dbReference type="GO" id="GO:0051287">
    <property type="term" value="F:NAD binding"/>
    <property type="evidence" value="ECO:0007669"/>
    <property type="project" value="InterPro"/>
</dbReference>
<dbReference type="GO" id="GO:0008270">
    <property type="term" value="F:zinc ion binding"/>
    <property type="evidence" value="ECO:0007669"/>
    <property type="project" value="UniProtKB-UniRule"/>
</dbReference>
<dbReference type="GO" id="GO:0000105">
    <property type="term" value="P:L-histidine biosynthetic process"/>
    <property type="evidence" value="ECO:0007669"/>
    <property type="project" value="UniProtKB-UniRule"/>
</dbReference>
<dbReference type="CDD" id="cd06572">
    <property type="entry name" value="Histidinol_dh"/>
    <property type="match status" value="1"/>
</dbReference>
<dbReference type="FunFam" id="3.40.50.1980:FF:000001">
    <property type="entry name" value="Histidinol dehydrogenase"/>
    <property type="match status" value="1"/>
</dbReference>
<dbReference type="FunFam" id="3.40.50.1980:FF:000026">
    <property type="entry name" value="Histidinol dehydrogenase"/>
    <property type="match status" value="1"/>
</dbReference>
<dbReference type="Gene3D" id="1.20.5.1300">
    <property type="match status" value="1"/>
</dbReference>
<dbReference type="Gene3D" id="3.40.50.1980">
    <property type="entry name" value="Nitrogenase molybdenum iron protein domain"/>
    <property type="match status" value="2"/>
</dbReference>
<dbReference type="HAMAP" id="MF_01024">
    <property type="entry name" value="HisD"/>
    <property type="match status" value="1"/>
</dbReference>
<dbReference type="InterPro" id="IPR016161">
    <property type="entry name" value="Ald_DH/histidinol_DH"/>
</dbReference>
<dbReference type="InterPro" id="IPR001692">
    <property type="entry name" value="Histidinol_DH_CS"/>
</dbReference>
<dbReference type="InterPro" id="IPR022695">
    <property type="entry name" value="Histidinol_DH_monofunct"/>
</dbReference>
<dbReference type="InterPro" id="IPR012131">
    <property type="entry name" value="Hstdl_DH"/>
</dbReference>
<dbReference type="NCBIfam" id="TIGR00069">
    <property type="entry name" value="hisD"/>
    <property type="match status" value="1"/>
</dbReference>
<dbReference type="NCBIfam" id="NF010343">
    <property type="entry name" value="PRK13770.1"/>
    <property type="match status" value="1"/>
</dbReference>
<dbReference type="PANTHER" id="PTHR21256:SF2">
    <property type="entry name" value="HISTIDINE BIOSYNTHESIS TRIFUNCTIONAL PROTEIN"/>
    <property type="match status" value="1"/>
</dbReference>
<dbReference type="PANTHER" id="PTHR21256">
    <property type="entry name" value="HISTIDINOL DEHYDROGENASE HDH"/>
    <property type="match status" value="1"/>
</dbReference>
<dbReference type="Pfam" id="PF00815">
    <property type="entry name" value="Histidinol_dh"/>
    <property type="match status" value="1"/>
</dbReference>
<dbReference type="PIRSF" id="PIRSF000099">
    <property type="entry name" value="Histidinol_dh"/>
    <property type="match status" value="1"/>
</dbReference>
<dbReference type="PRINTS" id="PR00083">
    <property type="entry name" value="HOLDHDRGNASE"/>
</dbReference>
<dbReference type="SUPFAM" id="SSF53720">
    <property type="entry name" value="ALDH-like"/>
    <property type="match status" value="1"/>
</dbReference>
<dbReference type="PROSITE" id="PS00611">
    <property type="entry name" value="HISOL_DEHYDROGENASE"/>
    <property type="match status" value="1"/>
</dbReference>
<name>HISX_STAES</name>
<sequence length="414" mass="46494">MLSAQQFLKEFNNVESLNESLYEIVSHICEEVKLQGDKALKNYNLQFDQVETEKLELEQSQLKNAYDMLDNETRDALEQSYQRIKVYQENIKVKQESSQQTECYERYHPIERVGIYVPGGKASYPSTVLMTATLAQVAGVNEITVVTPPQNNGICQEVLAACYITGVHHVYQVGGAQSIAALTYGTETIKKVDKIVGPGNQYVAYAKKFVFGQVGIDQIAGPTEIALIIDESADLDAIAYDVFAQAEHDEMACTYVISENEKVLNQLNTIIQEKLQYVERQDIISQSIANHHYLILAQDTEEACLIMNTIAPEHASIQTRAPEMYIDKVKYVGALFLGHFSPEVIGDYMAGPSHVLPTNQTARFTNGLSVNDFMTRHSVIHLSQKTFNEVAESAEHIAHIESLFNHEKSIHVRR</sequence>
<accession>Q8CQ95</accession>
<reference key="1">
    <citation type="journal article" date="2003" name="Mol. Microbiol.">
        <title>Genome-based analysis of virulence genes in a non-biofilm-forming Staphylococcus epidermidis strain (ATCC 12228).</title>
        <authorList>
            <person name="Zhang Y.-Q."/>
            <person name="Ren S.-X."/>
            <person name="Li H.-L."/>
            <person name="Wang Y.-X."/>
            <person name="Fu G."/>
            <person name="Yang J."/>
            <person name="Qin Z.-Q."/>
            <person name="Miao Y.-G."/>
            <person name="Wang W.-Y."/>
            <person name="Chen R.-S."/>
            <person name="Shen Y."/>
            <person name="Chen Z."/>
            <person name="Yuan Z.-H."/>
            <person name="Zhao G.-P."/>
            <person name="Qu D."/>
            <person name="Danchin A."/>
            <person name="Wen Y.-M."/>
        </authorList>
    </citation>
    <scope>NUCLEOTIDE SEQUENCE [LARGE SCALE GENOMIC DNA]</scope>
    <source>
        <strain>ATCC 12228 / FDA PCI 1200</strain>
    </source>
</reference>
<protein>
    <recommendedName>
        <fullName evidence="1">Histidinol dehydrogenase</fullName>
        <shortName evidence="1">HDH</shortName>
        <ecNumber evidence="1">1.1.1.23</ecNumber>
    </recommendedName>
</protein>
<proteinExistence type="inferred from homology"/>
<keyword id="KW-0028">Amino-acid biosynthesis</keyword>
<keyword id="KW-0368">Histidine biosynthesis</keyword>
<keyword id="KW-0479">Metal-binding</keyword>
<keyword id="KW-0520">NAD</keyword>
<keyword id="KW-0560">Oxidoreductase</keyword>
<keyword id="KW-0862">Zinc</keyword>
<feature type="chain" id="PRO_0000135855" description="Histidinol dehydrogenase">
    <location>
        <begin position="1"/>
        <end position="414"/>
    </location>
</feature>
<feature type="active site" description="Proton acceptor" evidence="1">
    <location>
        <position position="313"/>
    </location>
</feature>
<feature type="active site" description="Proton acceptor" evidence="1">
    <location>
        <position position="314"/>
    </location>
</feature>
<feature type="binding site" evidence="1">
    <location>
        <position position="116"/>
    </location>
    <ligand>
        <name>NAD(+)</name>
        <dbReference type="ChEBI" id="CHEBI:57540"/>
    </ligand>
</feature>
<feature type="binding site" evidence="1">
    <location>
        <position position="177"/>
    </location>
    <ligand>
        <name>NAD(+)</name>
        <dbReference type="ChEBI" id="CHEBI:57540"/>
    </ligand>
</feature>
<feature type="binding site" evidence="1">
    <location>
        <position position="200"/>
    </location>
    <ligand>
        <name>NAD(+)</name>
        <dbReference type="ChEBI" id="CHEBI:57540"/>
    </ligand>
</feature>
<feature type="binding site" evidence="1">
    <location>
        <position position="223"/>
    </location>
    <ligand>
        <name>substrate</name>
    </ligand>
</feature>
<feature type="binding site" evidence="1">
    <location>
        <position position="245"/>
    </location>
    <ligand>
        <name>substrate</name>
    </ligand>
</feature>
<feature type="binding site" evidence="1">
    <location>
        <position position="245"/>
    </location>
    <ligand>
        <name>Zn(2+)</name>
        <dbReference type="ChEBI" id="CHEBI:29105"/>
    </ligand>
</feature>
<feature type="binding site" evidence="1">
    <location>
        <position position="248"/>
    </location>
    <ligand>
        <name>substrate</name>
    </ligand>
</feature>
<feature type="binding site" evidence="1">
    <location>
        <position position="248"/>
    </location>
    <ligand>
        <name>Zn(2+)</name>
        <dbReference type="ChEBI" id="CHEBI:29105"/>
    </ligand>
</feature>
<feature type="binding site" evidence="1">
    <location>
        <position position="314"/>
    </location>
    <ligand>
        <name>substrate</name>
    </ligand>
</feature>
<feature type="binding site" evidence="1">
    <location>
        <position position="347"/>
    </location>
    <ligand>
        <name>substrate</name>
    </ligand>
</feature>
<feature type="binding site" evidence="1">
    <location>
        <position position="347"/>
    </location>
    <ligand>
        <name>Zn(2+)</name>
        <dbReference type="ChEBI" id="CHEBI:29105"/>
    </ligand>
</feature>
<feature type="binding site" evidence="1">
    <location>
        <position position="401"/>
    </location>
    <ligand>
        <name>substrate</name>
    </ligand>
</feature>
<feature type="binding site" evidence="1">
    <location>
        <position position="406"/>
    </location>
    <ligand>
        <name>substrate</name>
    </ligand>
</feature>
<feature type="binding site" evidence="1">
    <location>
        <position position="406"/>
    </location>
    <ligand>
        <name>Zn(2+)</name>
        <dbReference type="ChEBI" id="CHEBI:29105"/>
    </ligand>
</feature>
<comment type="function">
    <text evidence="1">Catalyzes the sequential NAD-dependent oxidations of L-histidinol to L-histidinaldehyde and then to L-histidine.</text>
</comment>
<comment type="catalytic activity">
    <reaction evidence="1">
        <text>L-histidinol + 2 NAD(+) + H2O = L-histidine + 2 NADH + 3 H(+)</text>
        <dbReference type="Rhea" id="RHEA:20641"/>
        <dbReference type="ChEBI" id="CHEBI:15377"/>
        <dbReference type="ChEBI" id="CHEBI:15378"/>
        <dbReference type="ChEBI" id="CHEBI:57540"/>
        <dbReference type="ChEBI" id="CHEBI:57595"/>
        <dbReference type="ChEBI" id="CHEBI:57699"/>
        <dbReference type="ChEBI" id="CHEBI:57945"/>
        <dbReference type="EC" id="1.1.1.23"/>
    </reaction>
</comment>
<comment type="cofactor">
    <cofactor evidence="1">
        <name>Zn(2+)</name>
        <dbReference type="ChEBI" id="CHEBI:29105"/>
    </cofactor>
    <text evidence="1">Binds 1 zinc ion per subunit.</text>
</comment>
<comment type="pathway">
    <text evidence="1">Amino-acid biosynthesis; L-histidine biosynthesis; L-histidine from 5-phospho-alpha-D-ribose 1-diphosphate: step 9/9.</text>
</comment>
<comment type="similarity">
    <text evidence="1">Belongs to the histidinol dehydrogenase family.</text>
</comment>
<evidence type="ECO:0000255" key="1">
    <source>
        <dbReference type="HAMAP-Rule" id="MF_01024"/>
    </source>
</evidence>
<gene>
    <name evidence="1" type="primary">hisD</name>
    <name type="ordered locus">SE_0272</name>
</gene>